<proteinExistence type="evidence at transcript level"/>
<name>RASEF_CAEEL</name>
<keyword id="KW-0106">Calcium</keyword>
<keyword id="KW-0175">Coiled coil</keyword>
<keyword id="KW-0963">Cytoplasm</keyword>
<keyword id="KW-0342">GTP-binding</keyword>
<keyword id="KW-0479">Metal-binding</keyword>
<keyword id="KW-0547">Nucleotide-binding</keyword>
<keyword id="KW-1185">Reference proteome</keyword>
<keyword id="KW-0677">Repeat</keyword>
<sequence length="634" mass="72272">MSKPEVENLFSLCDSESKGYLTMEDLRKVCPQLDDNDLRFIFTELDQDGSGKIEKLEFLRGFQDTVQHGESHGLNGMQRRASVAVEDPPMFLRDEQMFDSESDSTSSRPAIRVFDEEHYHSESDTNINIDFSVPCQEEVLVLYEQLQSSGVPALLRKFERVVGSFHKELSEKKHENERLQRIYASEREMYNRRMEEMESEVDQQLELTEMKARQEERDRLTKEKEEMRQRMSDEMSEMRNNIERLQKMEKALERENERLNHQKELSDKLKVVNEENNDLRQNLAENHLELAMIKSELAQVRCEFDQKQDELSARRDQASHATEESESVRKQLQLLFDANRKLHETNESLRDALDSRASVLRQFNLRTPSPGLLSSNRNSVENFQTSTNVFRSVPLHAISTEEQVPETSLILDDAHSLQGLDTPGDLMGLNDANGPAERTFRIVMCGDAAVGKSSFVMRVIRRQFTNQLPSTLGVDFHVKTVNVDGRNVALQLWDTAGQERFRSLCKSYFRRADGAILVYDVCAEQSFLRVRDWIETIKESTERSIPIILVGNKVDMRISTPGSVAKTDGASMAAAMGVLFMETSALDGSNIDNAMLALTRELMAVEDVEIRSTGVVLNPAVAKKGGCFSKCRGS</sequence>
<evidence type="ECO:0000250" key="1">
    <source>
        <dbReference type="UniProtKB" id="Q8IZ41"/>
    </source>
</evidence>
<evidence type="ECO:0000255" key="2"/>
<evidence type="ECO:0000255" key="3">
    <source>
        <dbReference type="PROSITE-ProRule" id="PRU00448"/>
    </source>
</evidence>
<evidence type="ECO:0000256" key="4">
    <source>
        <dbReference type="SAM" id="MobiDB-lite"/>
    </source>
</evidence>
<evidence type="ECO:0000269" key="5">
    <source>
    </source>
</evidence>
<evidence type="ECO:0000305" key="6"/>
<evidence type="ECO:0000312" key="7">
    <source>
        <dbReference type="WormBase" id="C33D12.6"/>
    </source>
</evidence>
<feature type="chain" id="PRO_0000299582" description="Ras and EF-hand domain-containing protein homolog">
    <location>
        <begin position="1"/>
        <end position="631"/>
    </location>
</feature>
<feature type="propeptide" id="PRO_0000370842" description="Removed in mature form" evidence="2">
    <location>
        <begin position="632"/>
        <end position="634"/>
    </location>
</feature>
<feature type="domain" description="EF-hand 1" evidence="6">
    <location>
        <begin position="5"/>
        <end position="33"/>
    </location>
</feature>
<feature type="domain" description="EF-hand 2" evidence="3">
    <location>
        <begin position="33"/>
        <end position="68"/>
    </location>
</feature>
<feature type="region of interest" description="Disordered" evidence="4">
    <location>
        <begin position="212"/>
        <end position="234"/>
    </location>
</feature>
<feature type="coiled-coil region" evidence="2">
    <location>
        <begin position="169"/>
        <end position="310"/>
    </location>
</feature>
<feature type="binding site" evidence="3">
    <location>
        <position position="46"/>
    </location>
    <ligand>
        <name>Ca(2+)</name>
        <dbReference type="ChEBI" id="CHEBI:29108"/>
    </ligand>
</feature>
<feature type="binding site" evidence="3">
    <location>
        <position position="48"/>
    </location>
    <ligand>
        <name>Ca(2+)</name>
        <dbReference type="ChEBI" id="CHEBI:29108"/>
    </ligand>
</feature>
<feature type="binding site" evidence="3">
    <location>
        <position position="50"/>
    </location>
    <ligand>
        <name>Ca(2+)</name>
        <dbReference type="ChEBI" id="CHEBI:29108"/>
    </ligand>
</feature>
<feature type="binding site" evidence="3">
    <location>
        <position position="52"/>
    </location>
    <ligand>
        <name>Ca(2+)</name>
        <dbReference type="ChEBI" id="CHEBI:29108"/>
    </ligand>
</feature>
<feature type="binding site" evidence="3">
    <location>
        <position position="57"/>
    </location>
    <ligand>
        <name>Ca(2+)</name>
        <dbReference type="ChEBI" id="CHEBI:29108"/>
    </ligand>
</feature>
<feature type="binding site" evidence="1">
    <location>
        <begin position="449"/>
        <end position="454"/>
    </location>
    <ligand>
        <name>GTP</name>
        <dbReference type="ChEBI" id="CHEBI:37565"/>
    </ligand>
</feature>
<feature type="binding site" evidence="1">
    <location>
        <begin position="552"/>
        <end position="555"/>
    </location>
    <ligand>
        <name>GTP</name>
        <dbReference type="ChEBI" id="CHEBI:37565"/>
    </ligand>
</feature>
<feature type="binding site" evidence="1">
    <location>
        <begin position="585"/>
        <end position="586"/>
    </location>
    <ligand>
        <name>GTP</name>
        <dbReference type="ChEBI" id="CHEBI:37565"/>
    </ligand>
</feature>
<accession>Q22908</accession>
<accession>Q21466</accession>
<accession>Q22906</accession>
<reference key="1">
    <citation type="journal article" date="1998" name="Science">
        <title>Genome sequence of the nematode C. elegans: a platform for investigating biology.</title>
        <authorList>
            <consortium name="The C. elegans sequencing consortium"/>
        </authorList>
    </citation>
    <scope>NUCLEOTIDE SEQUENCE [LARGE SCALE GENOMIC DNA]</scope>
    <source>
        <strain>Bristol N2</strain>
    </source>
</reference>
<reference key="2">
    <citation type="journal article" date="2014" name="Dev. Biol.">
        <title>Spatial and molecular cues for cell outgrowth during C. elegans uterine development.</title>
        <authorList>
            <person name="Ghosh S."/>
            <person name="Sternberg P.W."/>
        </authorList>
    </citation>
    <scope>FUNCTION</scope>
    <scope>DEVELOPMENTAL STAGE</scope>
    <scope>DISRUPTION PHENOTYPE</scope>
</reference>
<protein>
    <recommendedName>
        <fullName>Ras and EF-hand domain-containing protein homolog</fullName>
    </recommendedName>
</protein>
<comment type="function">
    <text evidence="1 5">Binds GTP and GDP (By similarity). Plays a role in uterine seam cell development (PubMed:25281934).</text>
</comment>
<comment type="subunit">
    <text evidence="1">Homodimer.</text>
</comment>
<comment type="subcellular location">
    <subcellularLocation>
        <location evidence="1">Cytoplasm</location>
        <location evidence="1">Perinuclear region</location>
    </subcellularLocation>
</comment>
<comment type="developmental stage">
    <text evidence="5">Expressed in the spermatheca and spermathecal-uterine junction at the L4 lethargus stage of larval development and in uterine toroid cells of young adults. Not expressed during early and mid-L4 stages of larval development.</text>
</comment>
<comment type="disruption phenotype">
    <text evidence="5">RNAi-mediated knockdown results in defective uterine seam (utse) cell nuclear migration, defective utse cell outgrowth and irregular uterine lumen formation.</text>
</comment>
<comment type="similarity">
    <text evidence="6">Belongs to the small GTPase superfamily. Rab family.</text>
</comment>
<organism>
    <name type="scientific">Caenorhabditis elegans</name>
    <dbReference type="NCBI Taxonomy" id="6239"/>
    <lineage>
        <taxon>Eukaryota</taxon>
        <taxon>Metazoa</taxon>
        <taxon>Ecdysozoa</taxon>
        <taxon>Nematoda</taxon>
        <taxon>Chromadorea</taxon>
        <taxon>Rhabditida</taxon>
        <taxon>Rhabditina</taxon>
        <taxon>Rhabditomorpha</taxon>
        <taxon>Rhabditoidea</taxon>
        <taxon>Rhabditidae</taxon>
        <taxon>Peloderinae</taxon>
        <taxon>Caenorhabditis</taxon>
    </lineage>
</organism>
<dbReference type="EMBL" id="BX284606">
    <property type="protein sequence ID" value="CCD66473.2"/>
    <property type="molecule type" value="Genomic_DNA"/>
</dbReference>
<dbReference type="PIR" id="T16628">
    <property type="entry name" value="T16628"/>
</dbReference>
<dbReference type="PIR" id="T25607">
    <property type="entry name" value="T25607"/>
</dbReference>
<dbReference type="RefSeq" id="NP_001359915.1">
    <property type="nucleotide sequence ID" value="NM_001373254.3"/>
</dbReference>
<dbReference type="RefSeq" id="NP_508523.1">
    <property type="nucleotide sequence ID" value="NM_076122.3"/>
</dbReference>
<dbReference type="SMR" id="Q22908"/>
<dbReference type="FunCoup" id="Q22908">
    <property type="interactions" value="29"/>
</dbReference>
<dbReference type="STRING" id="6239.C33D12.6.1"/>
<dbReference type="PaxDb" id="6239-C33D12.6"/>
<dbReference type="EnsemblMetazoa" id="C33D12.6.1">
    <property type="protein sequence ID" value="C33D12.6.1"/>
    <property type="gene ID" value="WBGene00016344"/>
</dbReference>
<dbReference type="GeneID" id="180593"/>
<dbReference type="UCSC" id="C33D12.6">
    <property type="organism name" value="c. elegans"/>
</dbReference>
<dbReference type="AGR" id="WB:WBGene00016344"/>
<dbReference type="WormBase" id="C33D12.6">
    <property type="protein sequence ID" value="CE53320"/>
    <property type="gene ID" value="WBGene00016344"/>
    <property type="gene designation" value="rsef-1"/>
</dbReference>
<dbReference type="eggNOG" id="KOG0078">
    <property type="taxonomic scope" value="Eukaryota"/>
</dbReference>
<dbReference type="GeneTree" id="ENSGT00940000167998"/>
<dbReference type="HOGENOM" id="CLU_023178_1_0_1"/>
<dbReference type="InParanoid" id="Q22908"/>
<dbReference type="OrthoDB" id="9989112at2759"/>
<dbReference type="PhylomeDB" id="Q22908"/>
<dbReference type="Reactome" id="R-CEL-6798695">
    <property type="pathway name" value="Neutrophil degranulation"/>
</dbReference>
<dbReference type="Reactome" id="R-CEL-8873719">
    <property type="pathway name" value="RAB geranylgeranylation"/>
</dbReference>
<dbReference type="PRO" id="PR:Q22908"/>
<dbReference type="Proteomes" id="UP000001940">
    <property type="component" value="Chromosome X"/>
</dbReference>
<dbReference type="Bgee" id="WBGene00016344">
    <property type="expression patterns" value="Expressed in pharyngeal muscle cell (C elegans) and 3 other cell types or tissues"/>
</dbReference>
<dbReference type="GO" id="GO:0048471">
    <property type="term" value="C:perinuclear region of cytoplasm"/>
    <property type="evidence" value="ECO:0007669"/>
    <property type="project" value="UniProtKB-SubCell"/>
</dbReference>
<dbReference type="GO" id="GO:0005509">
    <property type="term" value="F:calcium ion binding"/>
    <property type="evidence" value="ECO:0007669"/>
    <property type="project" value="InterPro"/>
</dbReference>
<dbReference type="GO" id="GO:0005525">
    <property type="term" value="F:GTP binding"/>
    <property type="evidence" value="ECO:0000318"/>
    <property type="project" value="GO_Central"/>
</dbReference>
<dbReference type="GO" id="GO:0003924">
    <property type="term" value="F:GTPase activity"/>
    <property type="evidence" value="ECO:0000318"/>
    <property type="project" value="GO_Central"/>
</dbReference>
<dbReference type="GO" id="GO:0016192">
    <property type="term" value="P:vesicle-mediated transport"/>
    <property type="evidence" value="ECO:0000318"/>
    <property type="project" value="GO_Central"/>
</dbReference>
<dbReference type="CDD" id="cd00154">
    <property type="entry name" value="Rab"/>
    <property type="match status" value="1"/>
</dbReference>
<dbReference type="FunFam" id="1.10.238.10:FF:000551">
    <property type="entry name" value="Mutated in colorectal cancer isoform 1"/>
    <property type="match status" value="1"/>
</dbReference>
<dbReference type="FunFam" id="3.40.50.300:FF:001348">
    <property type="entry name" value="Ras and EF-hand domain-containing protein"/>
    <property type="match status" value="1"/>
</dbReference>
<dbReference type="Gene3D" id="1.10.238.10">
    <property type="entry name" value="EF-hand"/>
    <property type="match status" value="1"/>
</dbReference>
<dbReference type="Gene3D" id="3.40.50.300">
    <property type="entry name" value="P-loop containing nucleotide triphosphate hydrolases"/>
    <property type="match status" value="1"/>
</dbReference>
<dbReference type="InterPro" id="IPR011992">
    <property type="entry name" value="EF-hand-dom_pair"/>
</dbReference>
<dbReference type="InterPro" id="IPR018247">
    <property type="entry name" value="EF_Hand_1_Ca_BS"/>
</dbReference>
<dbReference type="InterPro" id="IPR002048">
    <property type="entry name" value="EF_hand_dom"/>
</dbReference>
<dbReference type="InterPro" id="IPR027417">
    <property type="entry name" value="P-loop_NTPase"/>
</dbReference>
<dbReference type="InterPro" id="IPR050227">
    <property type="entry name" value="Rab"/>
</dbReference>
<dbReference type="InterPro" id="IPR005225">
    <property type="entry name" value="Small_GTP-bd"/>
</dbReference>
<dbReference type="InterPro" id="IPR001806">
    <property type="entry name" value="Small_GTPase"/>
</dbReference>
<dbReference type="NCBIfam" id="TIGR00231">
    <property type="entry name" value="small_GTP"/>
    <property type="match status" value="1"/>
</dbReference>
<dbReference type="PANTHER" id="PTHR47977">
    <property type="entry name" value="RAS-RELATED PROTEIN RAB"/>
    <property type="match status" value="1"/>
</dbReference>
<dbReference type="Pfam" id="PF13499">
    <property type="entry name" value="EF-hand_7"/>
    <property type="match status" value="1"/>
</dbReference>
<dbReference type="Pfam" id="PF00071">
    <property type="entry name" value="Ras"/>
    <property type="match status" value="1"/>
</dbReference>
<dbReference type="PRINTS" id="PR00449">
    <property type="entry name" value="RASTRNSFRMNG"/>
</dbReference>
<dbReference type="SMART" id="SM00177">
    <property type="entry name" value="ARF"/>
    <property type="match status" value="1"/>
</dbReference>
<dbReference type="SMART" id="SM00054">
    <property type="entry name" value="EFh"/>
    <property type="match status" value="2"/>
</dbReference>
<dbReference type="SMART" id="SM00175">
    <property type="entry name" value="RAB"/>
    <property type="match status" value="1"/>
</dbReference>
<dbReference type="SMART" id="SM00176">
    <property type="entry name" value="RAN"/>
    <property type="match status" value="1"/>
</dbReference>
<dbReference type="SMART" id="SM00173">
    <property type="entry name" value="RAS"/>
    <property type="match status" value="1"/>
</dbReference>
<dbReference type="SMART" id="SM00174">
    <property type="entry name" value="RHO"/>
    <property type="match status" value="1"/>
</dbReference>
<dbReference type="SUPFAM" id="SSF47473">
    <property type="entry name" value="EF-hand"/>
    <property type="match status" value="1"/>
</dbReference>
<dbReference type="SUPFAM" id="SSF52540">
    <property type="entry name" value="P-loop containing nucleoside triphosphate hydrolases"/>
    <property type="match status" value="1"/>
</dbReference>
<dbReference type="PROSITE" id="PS00018">
    <property type="entry name" value="EF_HAND_1"/>
    <property type="match status" value="1"/>
</dbReference>
<dbReference type="PROSITE" id="PS50222">
    <property type="entry name" value="EF_HAND_2"/>
    <property type="match status" value="1"/>
</dbReference>
<dbReference type="PROSITE" id="PS51419">
    <property type="entry name" value="RAB"/>
    <property type="match status" value="1"/>
</dbReference>
<gene>
    <name evidence="7" type="primary">rsef-1</name>
    <name evidence="7" type="synonym">tag-312</name>
    <name evidence="7" type="ORF">C33D12.6</name>
</gene>